<feature type="chain" id="PRO_0000075477" description="Insertion sequence IS5376 putative ATP-binding protein">
    <location>
        <begin position="1"/>
        <end position="251"/>
    </location>
</feature>
<feature type="binding site" evidence="1">
    <location>
        <begin position="105"/>
        <end position="112"/>
    </location>
    <ligand>
        <name>ATP</name>
        <dbReference type="ChEBI" id="CHEBI:30616"/>
    </ligand>
</feature>
<feature type="helix" evidence="3">
    <location>
        <begin position="70"/>
        <end position="72"/>
    </location>
</feature>
<feature type="turn" evidence="3">
    <location>
        <begin position="75"/>
        <end position="77"/>
    </location>
</feature>
<feature type="helix" evidence="3">
    <location>
        <begin position="83"/>
        <end position="89"/>
    </location>
</feature>
<feature type="turn" evidence="3">
    <location>
        <begin position="90"/>
        <end position="92"/>
    </location>
</feature>
<feature type="helix" evidence="3">
    <location>
        <begin position="93"/>
        <end position="96"/>
    </location>
</feature>
<feature type="strand" evidence="3">
    <location>
        <begin position="100"/>
        <end position="104"/>
    </location>
</feature>
<feature type="helix" evidence="3">
    <location>
        <begin position="111"/>
        <end position="124"/>
    </location>
</feature>
<feature type="strand" evidence="3">
    <location>
        <begin position="129"/>
        <end position="133"/>
    </location>
</feature>
<feature type="helix" evidence="3">
    <location>
        <begin position="134"/>
        <end position="146"/>
    </location>
</feature>
<feature type="helix" evidence="3">
    <location>
        <begin position="150"/>
        <end position="158"/>
    </location>
</feature>
<feature type="strand" evidence="3">
    <location>
        <begin position="159"/>
        <end position="168"/>
    </location>
</feature>
<feature type="turn" evidence="3">
    <location>
        <begin position="175"/>
        <end position="177"/>
    </location>
</feature>
<feature type="helix" evidence="3">
    <location>
        <begin position="178"/>
        <end position="188"/>
    </location>
</feature>
<feature type="turn" evidence="3">
    <location>
        <begin position="189"/>
        <end position="191"/>
    </location>
</feature>
<feature type="strand" evidence="3">
    <location>
        <begin position="194"/>
        <end position="200"/>
    </location>
</feature>
<feature type="helix" evidence="3">
    <location>
        <begin position="202"/>
        <end position="204"/>
    </location>
</feature>
<feature type="helix" evidence="3">
    <location>
        <begin position="205"/>
        <end position="209"/>
    </location>
</feature>
<feature type="helix" evidence="3">
    <location>
        <begin position="212"/>
        <end position="224"/>
    </location>
</feature>
<feature type="strand" evidence="3">
    <location>
        <begin position="225"/>
        <end position="230"/>
    </location>
</feature>
<feature type="helix" evidence="3">
    <location>
        <begin position="236"/>
        <end position="245"/>
    </location>
</feature>
<dbReference type="EMBL" id="X67861">
    <property type="protein sequence ID" value="CAA48046.1"/>
    <property type="molecule type" value="Genomic_DNA"/>
</dbReference>
<dbReference type="PIR" id="S23889">
    <property type="entry name" value="S23889"/>
</dbReference>
<dbReference type="RefSeq" id="WP_047817696.1">
    <property type="nucleotide sequence ID" value="NZ_RCTK01000123.1"/>
</dbReference>
<dbReference type="PDB" id="5BQ5">
    <property type="method" value="X-ray"/>
    <property type="resolution" value="2.10 A"/>
    <property type="chains" value="A/B/C=63-248"/>
</dbReference>
<dbReference type="PDB" id="8Q3W">
    <property type="method" value="EM"/>
    <property type="resolution" value="3.18 A"/>
    <property type="chains" value="A/B/C/D/E/F/G/H/I/J=1-251"/>
</dbReference>
<dbReference type="PDB" id="8Q4D">
    <property type="method" value="EM"/>
    <property type="resolution" value="3.62 A"/>
    <property type="chains" value="E/F/G/H/I/J/K/L/M/N/O/P/Q/R/S/T/U/V/W/X=1-246"/>
</dbReference>
<dbReference type="PDBsum" id="5BQ5"/>
<dbReference type="PDBsum" id="8Q3W"/>
<dbReference type="PDBsum" id="8Q4D"/>
<dbReference type="EMDB" id="EMD-18136"/>
<dbReference type="EMDB" id="EMD-18144"/>
<dbReference type="SMR" id="Q45619"/>
<dbReference type="GeneID" id="89614122"/>
<dbReference type="OrthoDB" id="2052561at2"/>
<dbReference type="EvolutionaryTrace" id="Q45619"/>
<dbReference type="GO" id="GO:0005524">
    <property type="term" value="F:ATP binding"/>
    <property type="evidence" value="ECO:0007669"/>
    <property type="project" value="UniProtKB-KW"/>
</dbReference>
<dbReference type="GO" id="GO:0016887">
    <property type="term" value="F:ATP hydrolysis activity"/>
    <property type="evidence" value="ECO:0007669"/>
    <property type="project" value="InterPro"/>
</dbReference>
<dbReference type="GO" id="GO:0006260">
    <property type="term" value="P:DNA replication"/>
    <property type="evidence" value="ECO:0007669"/>
    <property type="project" value="TreeGrafter"/>
</dbReference>
<dbReference type="CDD" id="cd00009">
    <property type="entry name" value="AAA"/>
    <property type="match status" value="1"/>
</dbReference>
<dbReference type="Gene3D" id="3.40.50.300">
    <property type="entry name" value="P-loop containing nucleotide triphosphate hydrolases"/>
    <property type="match status" value="1"/>
</dbReference>
<dbReference type="InterPro" id="IPR003593">
    <property type="entry name" value="AAA+_ATPase"/>
</dbReference>
<dbReference type="InterPro" id="IPR001270">
    <property type="entry name" value="ClpA/B"/>
</dbReference>
<dbReference type="InterPro" id="IPR028350">
    <property type="entry name" value="DNAC/IstB-like"/>
</dbReference>
<dbReference type="InterPro" id="IPR047661">
    <property type="entry name" value="IstB"/>
</dbReference>
<dbReference type="InterPro" id="IPR002611">
    <property type="entry name" value="IstB_ATP-bd"/>
</dbReference>
<dbReference type="InterPro" id="IPR027417">
    <property type="entry name" value="P-loop_NTPase"/>
</dbReference>
<dbReference type="NCBIfam" id="NF038214">
    <property type="entry name" value="IS21_help_AAA"/>
    <property type="match status" value="1"/>
</dbReference>
<dbReference type="PANTHER" id="PTHR30050:SF4">
    <property type="entry name" value="ATP-BINDING PROTEIN RV3427C IN INSERTION SEQUENCE-RELATED"/>
    <property type="match status" value="1"/>
</dbReference>
<dbReference type="PANTHER" id="PTHR30050">
    <property type="entry name" value="CHROMOSOMAL REPLICATION INITIATOR PROTEIN DNAA"/>
    <property type="match status" value="1"/>
</dbReference>
<dbReference type="Pfam" id="PF01695">
    <property type="entry name" value="IstB_IS21"/>
    <property type="match status" value="1"/>
</dbReference>
<dbReference type="PIRSF" id="PIRSF003073">
    <property type="entry name" value="DNAC_TnpB_IstB"/>
    <property type="match status" value="1"/>
</dbReference>
<dbReference type="PRINTS" id="PR00300">
    <property type="entry name" value="CLPPROTEASEA"/>
</dbReference>
<dbReference type="SMART" id="SM00382">
    <property type="entry name" value="AAA"/>
    <property type="match status" value="1"/>
</dbReference>
<dbReference type="SUPFAM" id="SSF52540">
    <property type="entry name" value="P-loop containing nucleoside triphosphate hydrolases"/>
    <property type="match status" value="1"/>
</dbReference>
<name>ISTB_GEOSE</name>
<accession>Q45619</accession>
<organism>
    <name type="scientific">Geobacillus stearothermophilus</name>
    <name type="common">Bacillus stearothermophilus</name>
    <dbReference type="NCBI Taxonomy" id="1422"/>
    <lineage>
        <taxon>Bacteria</taxon>
        <taxon>Bacillati</taxon>
        <taxon>Bacillota</taxon>
        <taxon>Bacilli</taxon>
        <taxon>Bacillales</taxon>
        <taxon>Anoxybacillaceae</taxon>
        <taxon>Geobacillus</taxon>
    </lineage>
</organism>
<reference key="1">
    <citation type="journal article" date="1993" name="Plasmid">
        <title>On two transposable elements from Bacillus stearothermophilus.</title>
        <authorList>
            <person name="Xu K."/>
            <person name="He Z.-Q."/>
            <person name="Mao Y.-M."/>
            <person name="Shen R.-Q."/>
            <person name="Sheng Z.-J."/>
        </authorList>
    </citation>
    <scope>NUCLEOTIDE SEQUENCE [GENOMIC DNA]</scope>
    <source>
        <strain>CU21</strain>
    </source>
</reference>
<proteinExistence type="evidence at protein level"/>
<comment type="similarity">
    <text evidence="2">Belongs to the IS21/IS1162 putative ATP-binding protein family.</text>
</comment>
<sequence>MKERIHEYCHRLHLPVMAERWSAMAEYASTHNISYSEFLFRLLEAEIVEKQARSIQTLIKLSKLPYRKTIDTFDFTAQPSVDERRIRELLTLSFIDRKENILFLGPPGIGKTHLAISIGMEAIARGYKTYFITAHDLVNQLRRADQEGKLEKKLRVFVKPTVLIIDEMGYLKLDPNSAHYLFQVIARRYEHAPIILTSNKSFGEWGEIVGDSVLATAMLDRLLHHSIIFNLKGESYRLREKRLQEEKQKDQ</sequence>
<protein>
    <recommendedName>
        <fullName>Insertion sequence IS5376 putative ATP-binding protein</fullName>
    </recommendedName>
</protein>
<keyword id="KW-0002">3D-structure</keyword>
<keyword id="KW-0067">ATP-binding</keyword>
<keyword id="KW-0547">Nucleotide-binding</keyword>
<keyword id="KW-0814">Transposable element</keyword>
<evidence type="ECO:0000255" key="1"/>
<evidence type="ECO:0000305" key="2"/>
<evidence type="ECO:0007829" key="3">
    <source>
        <dbReference type="PDB" id="5BQ5"/>
    </source>
</evidence>